<accession>B9K6M6</accession>
<feature type="chain" id="PRO_1000200162" description="UPF0102 protein CTN_0433">
    <location>
        <begin position="1"/>
        <end position="107"/>
    </location>
</feature>
<name>Y433_THENN</name>
<organism>
    <name type="scientific">Thermotoga neapolitana (strain ATCC 49049 / DSM 4359 / NBRC 107923 / NS-E)</name>
    <dbReference type="NCBI Taxonomy" id="309803"/>
    <lineage>
        <taxon>Bacteria</taxon>
        <taxon>Thermotogati</taxon>
        <taxon>Thermotogota</taxon>
        <taxon>Thermotogae</taxon>
        <taxon>Thermotogales</taxon>
        <taxon>Thermotogaceae</taxon>
        <taxon>Thermotoga</taxon>
    </lineage>
</organism>
<reference key="1">
    <citation type="submission" date="2007-11" db="EMBL/GenBank/DDBJ databases">
        <title>The genome sequence of the hyperthermophilic bacterium Thermotoga neapolitana.</title>
        <authorList>
            <person name="Lim S.K."/>
            <person name="Kim J.S."/>
            <person name="Cha S.H."/>
            <person name="Park B.C."/>
            <person name="Lee D.S."/>
            <person name="Tae H.S."/>
            <person name="Kim S.-J."/>
            <person name="Kim J.J."/>
            <person name="Park K.J."/>
            <person name="Lee S.Y."/>
        </authorList>
    </citation>
    <scope>NUCLEOTIDE SEQUENCE [LARGE SCALE GENOMIC DNA]</scope>
    <source>
        <strain>ATCC 49049 / DSM 4359 / NBRC 107923 / NS-E</strain>
    </source>
</reference>
<protein>
    <recommendedName>
        <fullName evidence="1">UPF0102 protein CTN_0433</fullName>
    </recommendedName>
</protein>
<sequence>MDWRAAEDLACDFLKKKGYRILERNYRTKYGEIDIIARCGKETVFVEVKSGRGKVDPLERIDMKKVRNIEKAAKLYMLQKGLKGPVRVDFVRVTPKGIDHFEGLWLG</sequence>
<proteinExistence type="inferred from homology"/>
<gene>
    <name type="ordered locus">CTN_0433</name>
</gene>
<evidence type="ECO:0000255" key="1">
    <source>
        <dbReference type="HAMAP-Rule" id="MF_00048"/>
    </source>
</evidence>
<dbReference type="EMBL" id="CP000916">
    <property type="protein sequence ID" value="ACM22609.1"/>
    <property type="molecule type" value="Genomic_DNA"/>
</dbReference>
<dbReference type="SMR" id="B9K6M6"/>
<dbReference type="STRING" id="309803.CTN_0433"/>
<dbReference type="KEGG" id="tna:CTN_0433"/>
<dbReference type="eggNOG" id="COG0792">
    <property type="taxonomic scope" value="Bacteria"/>
</dbReference>
<dbReference type="HOGENOM" id="CLU_115353_3_1_0"/>
<dbReference type="Proteomes" id="UP000000445">
    <property type="component" value="Chromosome"/>
</dbReference>
<dbReference type="GO" id="GO:0003676">
    <property type="term" value="F:nucleic acid binding"/>
    <property type="evidence" value="ECO:0007669"/>
    <property type="project" value="InterPro"/>
</dbReference>
<dbReference type="CDD" id="cd20736">
    <property type="entry name" value="PoNe_Nuclease"/>
    <property type="match status" value="1"/>
</dbReference>
<dbReference type="Gene3D" id="3.40.1350.10">
    <property type="match status" value="1"/>
</dbReference>
<dbReference type="HAMAP" id="MF_00048">
    <property type="entry name" value="UPF0102"/>
    <property type="match status" value="1"/>
</dbReference>
<dbReference type="InterPro" id="IPR011335">
    <property type="entry name" value="Restrct_endonuc-II-like"/>
</dbReference>
<dbReference type="InterPro" id="IPR011856">
    <property type="entry name" value="tRNA_endonuc-like_dom_sf"/>
</dbReference>
<dbReference type="InterPro" id="IPR003509">
    <property type="entry name" value="UPF0102_YraN-like"/>
</dbReference>
<dbReference type="NCBIfam" id="NF011270">
    <property type="entry name" value="PRK14677.1"/>
    <property type="match status" value="1"/>
</dbReference>
<dbReference type="PANTHER" id="PTHR34039">
    <property type="entry name" value="UPF0102 PROTEIN YRAN"/>
    <property type="match status" value="1"/>
</dbReference>
<dbReference type="PANTHER" id="PTHR34039:SF1">
    <property type="entry name" value="UPF0102 PROTEIN YRAN"/>
    <property type="match status" value="1"/>
</dbReference>
<dbReference type="Pfam" id="PF02021">
    <property type="entry name" value="UPF0102"/>
    <property type="match status" value="1"/>
</dbReference>
<dbReference type="SUPFAM" id="SSF52980">
    <property type="entry name" value="Restriction endonuclease-like"/>
    <property type="match status" value="1"/>
</dbReference>
<comment type="similarity">
    <text evidence="1">Belongs to the UPF0102 family.</text>
</comment>